<organism>
    <name type="scientific">Leptospira biflexa serovar Patoc (strain Patoc 1 / Ames)</name>
    <dbReference type="NCBI Taxonomy" id="355278"/>
    <lineage>
        <taxon>Bacteria</taxon>
        <taxon>Pseudomonadati</taxon>
        <taxon>Spirochaetota</taxon>
        <taxon>Spirochaetia</taxon>
        <taxon>Leptospirales</taxon>
        <taxon>Leptospiraceae</taxon>
        <taxon>Leptospira</taxon>
    </lineage>
</organism>
<comment type="function">
    <text evidence="1">Bifunctional enzyme that catalyzes the enolization of 2,3-diketo-5-methylthiopentyl-1-phosphate (DK-MTP-1-P) into the intermediate 2-hydroxy-3-keto-5-methylthiopentenyl-1-phosphate (HK-MTPenyl-1-P), which is then dephosphorylated to form the acireductone 1,2-dihydroxy-3-keto-5-methylthiopentene (DHK-MTPene).</text>
</comment>
<comment type="catalytic activity">
    <reaction evidence="1">
        <text>5-methylsulfanyl-2,3-dioxopentyl phosphate + H2O = 1,2-dihydroxy-5-(methylsulfanyl)pent-1-en-3-one + phosphate</text>
        <dbReference type="Rhea" id="RHEA:21700"/>
        <dbReference type="ChEBI" id="CHEBI:15377"/>
        <dbReference type="ChEBI" id="CHEBI:43474"/>
        <dbReference type="ChEBI" id="CHEBI:49252"/>
        <dbReference type="ChEBI" id="CHEBI:58828"/>
        <dbReference type="EC" id="3.1.3.77"/>
    </reaction>
</comment>
<comment type="cofactor">
    <cofactor evidence="1">
        <name>Mg(2+)</name>
        <dbReference type="ChEBI" id="CHEBI:18420"/>
    </cofactor>
    <text evidence="1">Binds 1 Mg(2+) ion per subunit.</text>
</comment>
<comment type="pathway">
    <text evidence="1">Amino-acid biosynthesis; L-methionine biosynthesis via salvage pathway; L-methionine from S-methyl-5-thio-alpha-D-ribose 1-phosphate: step 3/6.</text>
</comment>
<comment type="pathway">
    <text evidence="1">Amino-acid biosynthesis; L-methionine biosynthesis via salvage pathway; L-methionine from S-methyl-5-thio-alpha-D-ribose 1-phosphate: step 4/6.</text>
</comment>
<comment type="subunit">
    <text evidence="1">Monomer.</text>
</comment>
<comment type="similarity">
    <text evidence="1">Belongs to the HAD-like hydrolase superfamily. MasA/MtnC family.</text>
</comment>
<sequence length="247" mass="28335">MQIKHNLLDIEGTTAPIAFVHQILFPYATKNIHRFLKEYQLTELQWKEVQTEFQKDTSSGDPLFIEKFRIKNVPSGLIVNEVPNTLSKDMVSVYFEYLIEKDRKFGPLKEIQGKIWKEGYESGEIKSTVFDDVPKFLNDAIQSGIQNHVYSSGSVEAQHLIYQYSVLGDLRQYFTMYFDTAVGGKREKTSYERIASTLAVSPSEIRFFTDIVEEAEAANATGMDVVILNRPGNLAQKPHPFPVWEHF</sequence>
<name>MTNC_LEPBA</name>
<evidence type="ECO:0000255" key="1">
    <source>
        <dbReference type="HAMAP-Rule" id="MF_01681"/>
    </source>
</evidence>
<gene>
    <name evidence="1" type="primary">mtnC</name>
    <name type="ordered locus">LBF_2858</name>
</gene>
<feature type="chain" id="PRO_0000357375" description="Enolase-phosphatase E1">
    <location>
        <begin position="1"/>
        <end position="247"/>
    </location>
</feature>
<keyword id="KW-0028">Amino-acid biosynthesis</keyword>
<keyword id="KW-0378">Hydrolase</keyword>
<keyword id="KW-0460">Magnesium</keyword>
<keyword id="KW-0479">Metal-binding</keyword>
<keyword id="KW-0486">Methionine biosynthesis</keyword>
<dbReference type="EC" id="3.1.3.77" evidence="1"/>
<dbReference type="EMBL" id="CP000777">
    <property type="protein sequence ID" value="ABZ95333.1"/>
    <property type="molecule type" value="Genomic_DNA"/>
</dbReference>
<dbReference type="RefSeq" id="WP_012389886.1">
    <property type="nucleotide sequence ID" value="NC_010842.1"/>
</dbReference>
<dbReference type="SMR" id="B0SFG5"/>
<dbReference type="KEGG" id="lbf:LBF_2858"/>
<dbReference type="HOGENOM" id="CLU_023273_0_0_12"/>
<dbReference type="UniPathway" id="UPA00904">
    <property type="reaction ID" value="UER00876"/>
</dbReference>
<dbReference type="UniPathway" id="UPA00904">
    <property type="reaction ID" value="UER00877"/>
</dbReference>
<dbReference type="GO" id="GO:0043715">
    <property type="term" value="F:2,3-diketo-5-methylthiopentyl-1-phosphate enolase activity"/>
    <property type="evidence" value="ECO:0007669"/>
    <property type="project" value="UniProtKB-UniRule"/>
</dbReference>
<dbReference type="GO" id="GO:0043716">
    <property type="term" value="F:2-hydroxy-3-keto-5-methylthiopentenyl-1-phosphate phosphatase activity"/>
    <property type="evidence" value="ECO:0007669"/>
    <property type="project" value="UniProtKB-UniRule"/>
</dbReference>
<dbReference type="GO" id="GO:0043874">
    <property type="term" value="F:acireductone synthase activity"/>
    <property type="evidence" value="ECO:0007669"/>
    <property type="project" value="UniProtKB-EC"/>
</dbReference>
<dbReference type="GO" id="GO:0000287">
    <property type="term" value="F:magnesium ion binding"/>
    <property type="evidence" value="ECO:0007669"/>
    <property type="project" value="UniProtKB-UniRule"/>
</dbReference>
<dbReference type="GO" id="GO:0019509">
    <property type="term" value="P:L-methionine salvage from methylthioadenosine"/>
    <property type="evidence" value="ECO:0007669"/>
    <property type="project" value="UniProtKB-UniRule"/>
</dbReference>
<dbReference type="CDD" id="cd01629">
    <property type="entry name" value="HAD_EP"/>
    <property type="match status" value="1"/>
</dbReference>
<dbReference type="Gene3D" id="1.10.720.60">
    <property type="match status" value="1"/>
</dbReference>
<dbReference type="Gene3D" id="3.40.50.1000">
    <property type="entry name" value="HAD superfamily/HAD-like"/>
    <property type="match status" value="1"/>
</dbReference>
<dbReference type="HAMAP" id="MF_01681">
    <property type="entry name" value="Salvage_MtnC"/>
    <property type="match status" value="1"/>
</dbReference>
<dbReference type="InterPro" id="IPR023943">
    <property type="entry name" value="Enolase-ppase_E1"/>
</dbReference>
<dbReference type="InterPro" id="IPR036412">
    <property type="entry name" value="HAD-like_sf"/>
</dbReference>
<dbReference type="InterPro" id="IPR023214">
    <property type="entry name" value="HAD_sf"/>
</dbReference>
<dbReference type="NCBIfam" id="TIGR01691">
    <property type="entry name" value="enolase-ppase"/>
    <property type="match status" value="1"/>
</dbReference>
<dbReference type="PANTHER" id="PTHR20371">
    <property type="entry name" value="ENOLASE-PHOSPHATASE E1"/>
    <property type="match status" value="1"/>
</dbReference>
<dbReference type="PANTHER" id="PTHR20371:SF1">
    <property type="entry name" value="ENOLASE-PHOSPHATASE E1"/>
    <property type="match status" value="1"/>
</dbReference>
<dbReference type="SFLD" id="SFLDG01133">
    <property type="entry name" value="C1.5.4:_Enolase-phosphatase_Li"/>
    <property type="match status" value="1"/>
</dbReference>
<dbReference type="SFLD" id="SFLDS00003">
    <property type="entry name" value="Haloacid_Dehalogenase"/>
    <property type="match status" value="1"/>
</dbReference>
<dbReference type="SUPFAM" id="SSF56784">
    <property type="entry name" value="HAD-like"/>
    <property type="match status" value="1"/>
</dbReference>
<protein>
    <recommendedName>
        <fullName evidence="1">Enolase-phosphatase E1</fullName>
        <ecNumber evidence="1">3.1.3.77</ecNumber>
    </recommendedName>
    <alternativeName>
        <fullName evidence="1">2,3-diketo-5-methylthio-1-phosphopentane phosphatase</fullName>
    </alternativeName>
</protein>
<accession>B0SFG5</accession>
<proteinExistence type="inferred from homology"/>
<reference key="1">
    <citation type="journal article" date="2008" name="PLoS ONE">
        <title>Genome sequence of the saprophyte Leptospira biflexa provides insights into the evolution of Leptospira and the pathogenesis of leptospirosis.</title>
        <authorList>
            <person name="Picardeau M."/>
            <person name="Bulach D.M."/>
            <person name="Bouchier C."/>
            <person name="Zuerner R.L."/>
            <person name="Zidane N."/>
            <person name="Wilson P.J."/>
            <person name="Creno S."/>
            <person name="Kuczek E.S."/>
            <person name="Bommezzadri S."/>
            <person name="Davis J.C."/>
            <person name="McGrath A."/>
            <person name="Johnson M.J."/>
            <person name="Boursaux-Eude C."/>
            <person name="Seemann T."/>
            <person name="Rouy Z."/>
            <person name="Coppel R.L."/>
            <person name="Rood J.I."/>
            <person name="Lajus A."/>
            <person name="Davies J.K."/>
            <person name="Medigue C."/>
            <person name="Adler B."/>
        </authorList>
    </citation>
    <scope>NUCLEOTIDE SEQUENCE [LARGE SCALE GENOMIC DNA]</scope>
    <source>
        <strain>Patoc 1 / Ames</strain>
    </source>
</reference>